<accession>Q5HJS3</accession>
<gene>
    <name type="ordered locus">SACOL0079</name>
</gene>
<protein>
    <recommendedName>
        <fullName>Uncharacterized lipoprotein SACOL0079</fullName>
    </recommendedName>
</protein>
<evidence type="ECO:0000255" key="1">
    <source>
        <dbReference type="PROSITE-ProRule" id="PRU00303"/>
    </source>
</evidence>
<evidence type="ECO:0000305" key="2"/>
<keyword id="KW-1003">Cell membrane</keyword>
<keyword id="KW-0449">Lipoprotein</keyword>
<keyword id="KW-0472">Membrane</keyword>
<keyword id="KW-0564">Palmitate</keyword>
<keyword id="KW-0732">Signal</keyword>
<sequence length="255" mass="29656">MKRLNKLVLGIIFLFLVISITAGCGIGKEAEVKKSFEKTLSMYPIKNLEDLYDKEGYRDDQFDKNDKGTWIINSEMVIQPNNEDMVAKGMVLYMNRNTKTTNGYYYVDVTKDEDEGKPHDNEKRYPVKMVDNKIIPTKEIKDEKIKKEIENFKFFVQYGDFKNLKNYKDGDISYNPEVPSYSAKYQLTNDDYNVKQLRKRYDIPTSKAPKLLLKGSGNLKGSSVGYKDIEFTFVEKKEENIYFSDSLDYKKSGDV</sequence>
<comment type="subcellular location">
    <subcellularLocation>
        <location evidence="1">Cell membrane</location>
        <topology evidence="1">Lipid-anchor</topology>
    </subcellularLocation>
</comment>
<comment type="similarity">
    <text evidence="2">Belongs to the staphylococcal tandem lipoprotein family.</text>
</comment>
<comment type="sequence caution" evidence="2">
    <conflict type="erroneous initiation">
        <sequence resource="EMBL-CDS" id="AAW38723"/>
    </conflict>
</comment>
<reference key="1">
    <citation type="journal article" date="2005" name="J. Bacteriol.">
        <title>Insights on evolution of virulence and resistance from the complete genome analysis of an early methicillin-resistant Staphylococcus aureus strain and a biofilm-producing methicillin-resistant Staphylococcus epidermidis strain.</title>
        <authorList>
            <person name="Gill S.R."/>
            <person name="Fouts D.E."/>
            <person name="Archer G.L."/>
            <person name="Mongodin E.F."/>
            <person name="DeBoy R.T."/>
            <person name="Ravel J."/>
            <person name="Paulsen I.T."/>
            <person name="Kolonay J.F."/>
            <person name="Brinkac L.M."/>
            <person name="Beanan M.J."/>
            <person name="Dodson R.J."/>
            <person name="Daugherty S.C."/>
            <person name="Madupu R."/>
            <person name="Angiuoli S.V."/>
            <person name="Durkin A.S."/>
            <person name="Haft D.H."/>
            <person name="Vamathevan J.J."/>
            <person name="Khouri H."/>
            <person name="Utterback T.R."/>
            <person name="Lee C."/>
            <person name="Dimitrov G."/>
            <person name="Jiang L."/>
            <person name="Qin H."/>
            <person name="Weidman J."/>
            <person name="Tran K."/>
            <person name="Kang K.H."/>
            <person name="Hance I.R."/>
            <person name="Nelson K.E."/>
            <person name="Fraser C.M."/>
        </authorList>
    </citation>
    <scope>NUCLEOTIDE SEQUENCE [LARGE SCALE GENOMIC DNA]</scope>
    <source>
        <strain>COL</strain>
    </source>
</reference>
<dbReference type="EMBL" id="CP000046">
    <property type="protein sequence ID" value="AAW38723.1"/>
    <property type="status" value="ALT_INIT"/>
    <property type="molecule type" value="Genomic_DNA"/>
</dbReference>
<dbReference type="SMR" id="Q5HJS3"/>
<dbReference type="KEGG" id="sac:SACOL0079"/>
<dbReference type="HOGENOM" id="CLU_071589_0_1_9"/>
<dbReference type="Proteomes" id="UP000000530">
    <property type="component" value="Chromosome"/>
</dbReference>
<dbReference type="GO" id="GO:0005886">
    <property type="term" value="C:plasma membrane"/>
    <property type="evidence" value="ECO:0007669"/>
    <property type="project" value="UniProtKB-SubCell"/>
</dbReference>
<dbReference type="Gene3D" id="2.50.20.40">
    <property type="match status" value="1"/>
</dbReference>
<dbReference type="InterPro" id="IPR007595">
    <property type="entry name" value="Csa"/>
</dbReference>
<dbReference type="InterPro" id="IPR038641">
    <property type="entry name" value="Csa_sf"/>
</dbReference>
<dbReference type="NCBIfam" id="TIGR01742">
    <property type="entry name" value="SA_tandem_lipo"/>
    <property type="match status" value="1"/>
</dbReference>
<dbReference type="Pfam" id="PF04507">
    <property type="entry name" value="DUF576"/>
    <property type="match status" value="1"/>
</dbReference>
<dbReference type="PROSITE" id="PS51257">
    <property type="entry name" value="PROKAR_LIPOPROTEIN"/>
    <property type="match status" value="1"/>
</dbReference>
<proteinExistence type="inferred from homology"/>
<feature type="signal peptide" evidence="1">
    <location>
        <begin position="1"/>
        <end position="23"/>
    </location>
</feature>
<feature type="chain" id="PRO_0000282101" description="Uncharacterized lipoprotein SACOL0079">
    <location>
        <begin position="24"/>
        <end position="255"/>
    </location>
</feature>
<feature type="lipid moiety-binding region" description="N-palmitoyl cysteine" evidence="1">
    <location>
        <position position="24"/>
    </location>
</feature>
<feature type="lipid moiety-binding region" description="S-diacylglycerol cysteine" evidence="1">
    <location>
        <position position="24"/>
    </location>
</feature>
<name>Y079_STAAC</name>
<organism>
    <name type="scientific">Staphylococcus aureus (strain COL)</name>
    <dbReference type="NCBI Taxonomy" id="93062"/>
    <lineage>
        <taxon>Bacteria</taxon>
        <taxon>Bacillati</taxon>
        <taxon>Bacillota</taxon>
        <taxon>Bacilli</taxon>
        <taxon>Bacillales</taxon>
        <taxon>Staphylococcaceae</taxon>
        <taxon>Staphylococcus</taxon>
    </lineage>
</organism>